<sequence length="146" mass="17002">MSEIKRLEINYKTDELFENFRAFGNKDLYMVNELNGQMIDASSDSPFYGIFVGDQLGARMALLKKGDVEEIYFPDFEDYILLWKLEVLPKYQNRGYASELIDFAKSFNMPIKAIGRNDSKDFFLHHGFTDVEAKNIEGHDVLLWKP</sequence>
<name>Y1110_STAAS</name>
<organism>
    <name type="scientific">Staphylococcus aureus (strain MSSA476)</name>
    <dbReference type="NCBI Taxonomy" id="282459"/>
    <lineage>
        <taxon>Bacteria</taxon>
        <taxon>Bacillati</taxon>
        <taxon>Bacillota</taxon>
        <taxon>Bacilli</taxon>
        <taxon>Bacillales</taxon>
        <taxon>Staphylococcaceae</taxon>
        <taxon>Staphylococcus</taxon>
    </lineage>
</organism>
<feature type="chain" id="PRO_0000232484" description="Uncharacterized N-acetyltransferase SAS1110">
    <location>
        <begin position="1"/>
        <end position="146"/>
    </location>
</feature>
<feature type="domain" description="N-acetyltransferase">
    <location>
        <begin position="7"/>
        <end position="146"/>
    </location>
</feature>
<reference key="1">
    <citation type="journal article" date="2004" name="Proc. Natl. Acad. Sci. U.S.A.">
        <title>Complete genomes of two clinical Staphylococcus aureus strains: evidence for the rapid evolution of virulence and drug resistance.</title>
        <authorList>
            <person name="Holden M.T.G."/>
            <person name="Feil E.J."/>
            <person name="Lindsay J.A."/>
            <person name="Peacock S.J."/>
            <person name="Day N.P.J."/>
            <person name="Enright M.C."/>
            <person name="Foster T.J."/>
            <person name="Moore C.E."/>
            <person name="Hurst L."/>
            <person name="Atkin R."/>
            <person name="Barron A."/>
            <person name="Bason N."/>
            <person name="Bentley S.D."/>
            <person name="Chillingworth C."/>
            <person name="Chillingworth T."/>
            <person name="Churcher C."/>
            <person name="Clark L."/>
            <person name="Corton C."/>
            <person name="Cronin A."/>
            <person name="Doggett J."/>
            <person name="Dowd L."/>
            <person name="Feltwell T."/>
            <person name="Hance Z."/>
            <person name="Harris B."/>
            <person name="Hauser H."/>
            <person name="Holroyd S."/>
            <person name="Jagels K."/>
            <person name="James K.D."/>
            <person name="Lennard N."/>
            <person name="Line A."/>
            <person name="Mayes R."/>
            <person name="Moule S."/>
            <person name="Mungall K."/>
            <person name="Ormond D."/>
            <person name="Quail M.A."/>
            <person name="Rabbinowitsch E."/>
            <person name="Rutherford K.M."/>
            <person name="Sanders M."/>
            <person name="Sharp S."/>
            <person name="Simmonds M."/>
            <person name="Stevens K."/>
            <person name="Whitehead S."/>
            <person name="Barrell B.G."/>
            <person name="Spratt B.G."/>
            <person name="Parkhill J."/>
        </authorList>
    </citation>
    <scope>NUCLEOTIDE SEQUENCE [LARGE SCALE GENOMIC DNA]</scope>
    <source>
        <strain>MSSA476</strain>
    </source>
</reference>
<dbReference type="EC" id="2.3.1.-"/>
<dbReference type="EMBL" id="BX571857">
    <property type="protein sequence ID" value="CAG42887.1"/>
    <property type="molecule type" value="Genomic_DNA"/>
</dbReference>
<dbReference type="RefSeq" id="WP_001289711.1">
    <property type="nucleotide sequence ID" value="NC_002953.3"/>
</dbReference>
<dbReference type="SMR" id="Q6GA36"/>
<dbReference type="KEGG" id="sas:SAS1110"/>
<dbReference type="HOGENOM" id="CLU_136634_0_0_9"/>
<dbReference type="GO" id="GO:0016747">
    <property type="term" value="F:acyltransferase activity, transferring groups other than amino-acyl groups"/>
    <property type="evidence" value="ECO:0007669"/>
    <property type="project" value="UniProtKB-UniRule"/>
</dbReference>
<dbReference type="CDD" id="cd04301">
    <property type="entry name" value="NAT_SF"/>
    <property type="match status" value="1"/>
</dbReference>
<dbReference type="Gene3D" id="3.40.630.30">
    <property type="match status" value="1"/>
</dbReference>
<dbReference type="HAMAP" id="MF_00824">
    <property type="entry name" value="Acetyltransf_YlbP"/>
    <property type="match status" value="1"/>
</dbReference>
<dbReference type="InterPro" id="IPR016181">
    <property type="entry name" value="Acyl_CoA_acyltransferase"/>
</dbReference>
<dbReference type="InterPro" id="IPR000182">
    <property type="entry name" value="GNAT_dom"/>
</dbReference>
<dbReference type="InterPro" id="IPR017274">
    <property type="entry name" value="YlbP"/>
</dbReference>
<dbReference type="NCBIfam" id="NF010241">
    <property type="entry name" value="PRK13688.1"/>
    <property type="match status" value="1"/>
</dbReference>
<dbReference type="PIRSF" id="PIRSF037732">
    <property type="entry name" value="YlbP_prd"/>
    <property type="match status" value="1"/>
</dbReference>
<dbReference type="SUPFAM" id="SSF55729">
    <property type="entry name" value="Acyl-CoA N-acyltransferases (Nat)"/>
    <property type="match status" value="1"/>
</dbReference>
<dbReference type="PROSITE" id="PS51186">
    <property type="entry name" value="GNAT"/>
    <property type="match status" value="1"/>
</dbReference>
<protein>
    <recommendedName>
        <fullName>Uncharacterized N-acetyltransferase SAS1110</fullName>
        <ecNumber>2.3.1.-</ecNumber>
    </recommendedName>
</protein>
<proteinExistence type="inferred from homology"/>
<accession>Q6GA36</accession>
<gene>
    <name type="ordered locus">SAS1110</name>
</gene>
<keyword id="KW-0012">Acyltransferase</keyword>
<keyword id="KW-0808">Transferase</keyword>